<feature type="chain" id="PRO_0000106584" description="Tail knob protein gp9">
    <location>
        <begin position="1"/>
        <end position="599"/>
    </location>
</feature>
<organism>
    <name type="scientific">Bacillus phage PZA</name>
    <name type="common">Bacteriophage PZA</name>
    <dbReference type="NCBI Taxonomy" id="10757"/>
    <lineage>
        <taxon>Viruses</taxon>
        <taxon>Duplodnaviria</taxon>
        <taxon>Heunggongvirae</taxon>
        <taxon>Uroviricota</taxon>
        <taxon>Caudoviricetes</taxon>
        <taxon>Salasmaviridae</taxon>
        <taxon>Picovirinae</taxon>
        <taxon>Salasvirus</taxon>
        <taxon>Salasvirus PZA</taxon>
    </lineage>
</organism>
<protein>
    <recommendedName>
        <fullName evidence="1">Tail knob protein gp9</fullName>
    </recommendedName>
    <alternativeName>
        <fullName evidence="1">Distal tube protein</fullName>
    </alternativeName>
    <alternativeName>
        <fullName evidence="1">Gene product 9</fullName>
        <shortName evidence="1">gp9</shortName>
    </alternativeName>
    <alternativeName>
        <fullName evidence="1">Protein p9</fullName>
    </alternativeName>
</protein>
<accession>P07534</accession>
<name>DIT9_BPPZA</name>
<comment type="function">
    <text evidence="1">Distal (knob) tail protein that plugs the end of the tube before DNA ejection and forms a channel perforating the host membrane during ejection.</text>
</comment>
<comment type="subunit">
    <text evidence="1">Homohexamer; forms a hexameric tube structure with six flexible hydrophobic loops.</text>
</comment>
<comment type="subcellular location">
    <subcellularLocation>
        <location evidence="1">Virion</location>
    </subcellularLocation>
    <text evidence="1">Present in 6 copies in the virion. Located at the tip of the tail and constitutes most of the tail knob.</text>
</comment>
<comment type="similarity">
    <text evidence="2">Belongs to the picovirinae distal tube protein family.</text>
</comment>
<keyword id="KW-0426">Late protein</keyword>
<keyword id="KW-1172">Pore-mediated penetration of viral genome into host cell</keyword>
<keyword id="KW-1171">Viral genome ejection through host cell envelope</keyword>
<keyword id="KW-1162">Viral penetration into host cytoplasm</keyword>
<keyword id="KW-1244">Viral short tail ejection system</keyword>
<keyword id="KW-1227">Viral tail protein</keyword>
<keyword id="KW-1228">Viral tail tube protein</keyword>
<keyword id="KW-0946">Virion</keyword>
<keyword id="KW-1160">Virus entry into host cell</keyword>
<dbReference type="EMBL" id="M11813">
    <property type="protein sequence ID" value="AAA88486.1"/>
    <property type="molecule type" value="Genomic_DNA"/>
</dbReference>
<dbReference type="PIR" id="D24831">
    <property type="entry name" value="WMBP9Z"/>
</dbReference>
<dbReference type="SMR" id="P07534"/>
<dbReference type="Proteomes" id="UP000000855">
    <property type="component" value="Segment"/>
</dbReference>
<dbReference type="GO" id="GO:0098026">
    <property type="term" value="C:virus tail, tube"/>
    <property type="evidence" value="ECO:0007669"/>
    <property type="project" value="UniProtKB-KW"/>
</dbReference>
<dbReference type="GO" id="GO:0099002">
    <property type="term" value="P:symbiont genome ejection through host cell envelope, short tail mechanism"/>
    <property type="evidence" value="ECO:0007669"/>
    <property type="project" value="UniProtKB-KW"/>
</dbReference>
<dbReference type="GO" id="GO:0044694">
    <property type="term" value="P:symbiont genome entry into host cell via pore formation in plasma membrane"/>
    <property type="evidence" value="ECO:0007669"/>
    <property type="project" value="UniProtKB-KW"/>
</dbReference>
<dbReference type="InterPro" id="IPR048710">
    <property type="entry name" value="Gp9_C"/>
</dbReference>
<dbReference type="InterPro" id="IPR031772">
    <property type="entry name" value="Gp9_N"/>
</dbReference>
<dbReference type="Pfam" id="PF16838">
    <property type="entry name" value="Caud_tail_N"/>
    <property type="match status" value="1"/>
</dbReference>
<dbReference type="Pfam" id="PF20934">
    <property type="entry name" value="phi29_gp9_C"/>
    <property type="match status" value="1"/>
</dbReference>
<gene>
    <name type="primary">9</name>
</gene>
<proteinExistence type="inferred from homology"/>
<sequence length="599" mass="67668">MAYVPLSGTNVRILADVPFSNDYKNTRWFTSSSNQYNWFNSKTRVYEMSKVTFQGFRENKSYISVSLRLDLLYNASYIMFQNADYGNKWFYAFVTELEYKNVGTTYVHFEIDVLQTWMFNIKFQESFIVREHVKLWNDDGTPTINTIDEGLNYGSEYDIVSVENHRPYDDMMFLVVISKSIMHGTAGEAESRLNDINASLNGMPQPLCYYIHPFYKDGKVPKTFIGDNNANLSPIVNMLTNIFSQKSAVNNIVNMYVTDYIGLKLDYKNGDKELKLDKDMFEQAGIADDKHGNVDTIFVKKIPDYETLEIDTGDKWGGFTKDQESKLMMYPYCVTEVTDFKGNHMNLKTEYIDNNKLKIQVRGSLGVSNKVAYSIQDYNAGGSLSGGDRLTASLDTSLINNNPNDIAIINDYLSAYLQGNKNSLENQKSSILFNGIVGMLGGGVSAGASAVGRSPFGLASSVTGMTSTAGNAVLDMQALQAKQADIANIPPQLTKMGGNTAFDYGNGYRGVYVIKKQLKAEYRRSLSSFFHKYGYKINRVKKPNLRTRKAYNYIQTKDCFISGDINNNDLQEIRTIFDNGITLWHTDDIGNYSVENELR</sequence>
<evidence type="ECO:0000250" key="1">
    <source>
        <dbReference type="UniProtKB" id="P04331"/>
    </source>
</evidence>
<evidence type="ECO:0000305" key="2"/>
<organismHost>
    <name type="scientific">Bacillus subtilis</name>
    <dbReference type="NCBI Taxonomy" id="1423"/>
</organismHost>
<reference key="1">
    <citation type="journal article" date="1986" name="Gene">
        <title>Nucleotide sequence of the late region of Bacillus subtilis phage PZA, a close relative of phi 29.</title>
        <authorList>
            <person name="Paces V."/>
            <person name="Vlcek C."/>
            <person name="Urbanek P."/>
        </authorList>
    </citation>
    <scope>NUCLEOTIDE SEQUENCE [GENOMIC DNA]</scope>
</reference>